<name>CRYD_NEUCR</name>
<proteinExistence type="inferred from homology"/>
<feature type="transit peptide" description="Mitochondrion" evidence="2">
    <location>
        <begin position="1"/>
        <end position="22"/>
    </location>
</feature>
<feature type="chain" id="PRO_0000235322" description="Putative cryptochrome DASH, mitochondrial">
    <location>
        <begin position="23"/>
        <end position="745"/>
    </location>
</feature>
<feature type="domain" description="Photolyase/cryptochrome alpha/beta">
    <location>
        <begin position="23"/>
        <end position="166"/>
    </location>
</feature>
<feature type="region of interest" description="Disordered" evidence="3">
    <location>
        <begin position="563"/>
        <end position="688"/>
    </location>
</feature>
<feature type="region of interest" description="Disordered" evidence="3">
    <location>
        <begin position="702"/>
        <end position="745"/>
    </location>
</feature>
<feature type="compositionally biased region" description="Basic residues" evidence="3">
    <location>
        <begin position="571"/>
        <end position="584"/>
    </location>
</feature>
<feature type="compositionally biased region" description="Low complexity" evidence="3">
    <location>
        <begin position="591"/>
        <end position="603"/>
    </location>
</feature>
<feature type="compositionally biased region" description="Gly residues" evidence="3">
    <location>
        <begin position="604"/>
        <end position="616"/>
    </location>
</feature>
<feature type="compositionally biased region" description="Low complexity" evidence="3">
    <location>
        <begin position="632"/>
        <end position="648"/>
    </location>
</feature>
<feature type="compositionally biased region" description="Gly residues" evidence="3">
    <location>
        <begin position="672"/>
        <end position="688"/>
    </location>
</feature>
<feature type="compositionally biased region" description="Gly residues" evidence="3">
    <location>
        <begin position="702"/>
        <end position="718"/>
    </location>
</feature>
<feature type="compositionally biased region" description="Polar residues" evidence="3">
    <location>
        <begin position="735"/>
        <end position="745"/>
    </location>
</feature>
<accession>Q7SI68</accession>
<sequence length="745" mass="81412">MAPSKVVIYAMRRELRLSDNPIFHHLSNPESKHGFSHLLPVYVFPAQQIDLSGFVPKGSENPHPAPKSAVGGYARCGPYRAKFLAESVWDLKTSLQSIGSDLLVRAGPYKDVIQSLVEGLKAKECQVGAVWMTSHEGSEEKSEEKTVASFCAKSGIDFKLWDDEKYLIHDRDTGITHLNDLPDVFTTYRKQIEPLREKARKTLPVPEKGALPAYPDIDMIPSQQPPFNIPGTCEELVDAVVRPVKNFLKDLPDFPEKAESSHPFRGGETSAHKRIDHLVLSGGMKSYKDSRNGLLGPDFSTKLSAYLAQGCVTARQIHHALVAYEDGTGTKYKGADGFGEGDNQGTETVRMELLWRDYMRLCHQKYGDKLFRVEGFNGKHTDYEGEDKKYGWRTANTSIALPGQEPTPEKVSEILARFNAGTTGMGLIDASQRELIHTGYTSNRTRQNVASFLAKHLEIDWRYGAEWYEMLLVDYDVSSNWANWQYVAGVGNDPRGAARIFNPVKQAFDYDKDGTYVRTWVPEVAKFENLENVFQAWTASKEDLKTAGLEGNIMVTDPVKPIKFNLDHKPSKVKKRPFFRKRGTKTRDAQGSAESPGSSDSHSGSGGSPDGSGGGNIPSESNCAAAGSGQAQQTHQGSGRSQSSSNHGGRSHSHQHNQQNYHHSHRGNDYTRGGGGGRGGRGGRGGGGGGYSASQGYYGIGGGYRGGGRGRGGGGGFRGRYAPTGGLGGHHHSEQQVASQFQTDA</sequence>
<gene>
    <name type="primary">cry</name>
    <name type="ORF">B22I21.260</name>
    <name type="ORF">NCU00582</name>
</gene>
<comment type="function">
    <text evidence="1">May have a photoreceptor function.</text>
</comment>
<comment type="cofactor">
    <cofactor evidence="1">
        <name>FAD</name>
        <dbReference type="ChEBI" id="CHEBI:57692"/>
    </cofactor>
    <text evidence="1">Binds 1 FAD per subunit.</text>
</comment>
<comment type="cofactor">
    <cofactor evidence="1">
        <name>(6R)-5,10-methylene-5,6,7,8-tetrahydrofolate</name>
        <dbReference type="ChEBI" id="CHEBI:15636"/>
    </cofactor>
    <text evidence="1">Binds 1 5,10-methenyltetrahydrofolate (MTHF) per subunit.</text>
</comment>
<comment type="subcellular location">
    <subcellularLocation>
        <location evidence="4">Mitochondrion</location>
    </subcellularLocation>
</comment>
<comment type="similarity">
    <text evidence="4">Belongs to the DNA photolyase class-1 family.</text>
</comment>
<dbReference type="EMBL" id="BX842641">
    <property type="protein sequence ID" value="CAE76612.1"/>
    <property type="molecule type" value="Genomic_DNA"/>
</dbReference>
<dbReference type="EMBL" id="CM002236">
    <property type="protein sequence ID" value="EAA36486.3"/>
    <property type="molecule type" value="Genomic_DNA"/>
</dbReference>
<dbReference type="RefSeq" id="XP_965722.3">
    <property type="nucleotide sequence ID" value="XM_960629.3"/>
</dbReference>
<dbReference type="SMR" id="Q7SI68"/>
<dbReference type="STRING" id="367110.Q7SI68"/>
<dbReference type="PaxDb" id="5141-EFNCRP00000000625"/>
<dbReference type="EnsemblFungi" id="EAA36486">
    <property type="protein sequence ID" value="EAA36486"/>
    <property type="gene ID" value="NCU00582"/>
</dbReference>
<dbReference type="GeneID" id="3881951"/>
<dbReference type="KEGG" id="ncr:NCU00582"/>
<dbReference type="VEuPathDB" id="FungiDB:NCU00582"/>
<dbReference type="HOGENOM" id="CLU_010348_6_1_1"/>
<dbReference type="InParanoid" id="Q7SI68"/>
<dbReference type="OrthoDB" id="435881at2759"/>
<dbReference type="Proteomes" id="UP000001805">
    <property type="component" value="Chromosome 1, Linkage Group I"/>
</dbReference>
<dbReference type="GO" id="GO:0005739">
    <property type="term" value="C:mitochondrion"/>
    <property type="evidence" value="ECO:0007669"/>
    <property type="project" value="UniProtKB-SubCell"/>
</dbReference>
<dbReference type="GO" id="GO:0003684">
    <property type="term" value="F:damaged DNA binding"/>
    <property type="evidence" value="ECO:0000318"/>
    <property type="project" value="GO_Central"/>
</dbReference>
<dbReference type="GO" id="GO:0003904">
    <property type="term" value="F:deoxyribodipyrimidine photo-lyase activity"/>
    <property type="evidence" value="ECO:0000318"/>
    <property type="project" value="GO_Central"/>
</dbReference>
<dbReference type="GO" id="GO:0071949">
    <property type="term" value="F:FAD binding"/>
    <property type="evidence" value="ECO:0000318"/>
    <property type="project" value="GO_Central"/>
</dbReference>
<dbReference type="GO" id="GO:0000719">
    <property type="term" value="P:photoreactive repair"/>
    <property type="evidence" value="ECO:0000318"/>
    <property type="project" value="GO_Central"/>
</dbReference>
<dbReference type="Gene3D" id="1.25.40.80">
    <property type="match status" value="1"/>
</dbReference>
<dbReference type="Gene3D" id="1.10.579.10">
    <property type="entry name" value="DNA Cyclobutane Dipyrimidine Photolyase, subunit A, domain 3"/>
    <property type="match status" value="1"/>
</dbReference>
<dbReference type="Gene3D" id="3.40.50.620">
    <property type="entry name" value="HUPs"/>
    <property type="match status" value="1"/>
</dbReference>
<dbReference type="InterPro" id="IPR014133">
    <property type="entry name" value="Cry_DASH"/>
</dbReference>
<dbReference type="InterPro" id="IPR036134">
    <property type="entry name" value="Crypto/Photolyase_FAD-like_sf"/>
</dbReference>
<dbReference type="InterPro" id="IPR036155">
    <property type="entry name" value="Crypto/Photolyase_N_sf"/>
</dbReference>
<dbReference type="InterPro" id="IPR005101">
    <property type="entry name" value="Cryptochr/Photolyase_FAD-bd"/>
</dbReference>
<dbReference type="InterPro" id="IPR002081">
    <property type="entry name" value="Cryptochrome/DNA_photolyase_1"/>
</dbReference>
<dbReference type="InterPro" id="IPR006050">
    <property type="entry name" value="DNA_photolyase_N"/>
</dbReference>
<dbReference type="InterPro" id="IPR014729">
    <property type="entry name" value="Rossmann-like_a/b/a_fold"/>
</dbReference>
<dbReference type="NCBIfam" id="TIGR02765">
    <property type="entry name" value="crypto_DASH"/>
    <property type="match status" value="1"/>
</dbReference>
<dbReference type="PANTHER" id="PTHR11455">
    <property type="entry name" value="CRYPTOCHROME"/>
    <property type="match status" value="1"/>
</dbReference>
<dbReference type="PANTHER" id="PTHR11455:SF22">
    <property type="entry name" value="CRYPTOCHROME DASH"/>
    <property type="match status" value="1"/>
</dbReference>
<dbReference type="Pfam" id="PF00875">
    <property type="entry name" value="DNA_photolyase"/>
    <property type="match status" value="1"/>
</dbReference>
<dbReference type="Pfam" id="PF03441">
    <property type="entry name" value="FAD_binding_7"/>
    <property type="match status" value="1"/>
</dbReference>
<dbReference type="PRINTS" id="PR00147">
    <property type="entry name" value="DNAPHOTLYASE"/>
</dbReference>
<dbReference type="SUPFAM" id="SSF48173">
    <property type="entry name" value="Cryptochrome/photolyase FAD-binding domain"/>
    <property type="match status" value="1"/>
</dbReference>
<dbReference type="SUPFAM" id="SSF52425">
    <property type="entry name" value="Cryptochrome/photolyase, N-terminal domain"/>
    <property type="match status" value="1"/>
</dbReference>
<dbReference type="PROSITE" id="PS51645">
    <property type="entry name" value="PHR_CRY_ALPHA_BETA"/>
    <property type="match status" value="1"/>
</dbReference>
<evidence type="ECO:0000250" key="1"/>
<evidence type="ECO:0000255" key="2"/>
<evidence type="ECO:0000256" key="3">
    <source>
        <dbReference type="SAM" id="MobiDB-lite"/>
    </source>
</evidence>
<evidence type="ECO:0000305" key="4"/>
<protein>
    <recommendedName>
        <fullName>Putative cryptochrome DASH, mitochondrial</fullName>
    </recommendedName>
</protein>
<keyword id="KW-0157">Chromophore</keyword>
<keyword id="KW-0274">FAD</keyword>
<keyword id="KW-0285">Flavoprotein</keyword>
<keyword id="KW-0496">Mitochondrion</keyword>
<keyword id="KW-1185">Reference proteome</keyword>
<keyword id="KW-0809">Transit peptide</keyword>
<organism>
    <name type="scientific">Neurospora crassa (strain ATCC 24698 / 74-OR23-1A / CBS 708.71 / DSM 1257 / FGSC 987)</name>
    <dbReference type="NCBI Taxonomy" id="367110"/>
    <lineage>
        <taxon>Eukaryota</taxon>
        <taxon>Fungi</taxon>
        <taxon>Dikarya</taxon>
        <taxon>Ascomycota</taxon>
        <taxon>Pezizomycotina</taxon>
        <taxon>Sordariomycetes</taxon>
        <taxon>Sordariomycetidae</taxon>
        <taxon>Sordariales</taxon>
        <taxon>Sordariaceae</taxon>
        <taxon>Neurospora</taxon>
    </lineage>
</organism>
<reference key="1">
    <citation type="journal article" date="2003" name="Nucleic Acids Res.">
        <title>What's in the genome of a filamentous fungus? Analysis of the Neurospora genome sequence.</title>
        <authorList>
            <person name="Mannhaupt G."/>
            <person name="Montrone C."/>
            <person name="Haase D."/>
            <person name="Mewes H.-W."/>
            <person name="Aign V."/>
            <person name="Hoheisel J.D."/>
            <person name="Fartmann B."/>
            <person name="Nyakatura G."/>
            <person name="Kempken F."/>
            <person name="Maier J."/>
            <person name="Schulte U."/>
        </authorList>
    </citation>
    <scope>NUCLEOTIDE SEQUENCE [LARGE SCALE GENOMIC DNA]</scope>
    <source>
        <strain>ATCC 24698 / 74-OR23-1A / CBS 708.71 / DSM 1257 / FGSC 987</strain>
    </source>
</reference>
<reference key="2">
    <citation type="journal article" date="2003" name="Nature">
        <title>The genome sequence of the filamentous fungus Neurospora crassa.</title>
        <authorList>
            <person name="Galagan J.E."/>
            <person name="Calvo S.E."/>
            <person name="Borkovich K.A."/>
            <person name="Selker E.U."/>
            <person name="Read N.D."/>
            <person name="Jaffe D.B."/>
            <person name="FitzHugh W."/>
            <person name="Ma L.-J."/>
            <person name="Smirnov S."/>
            <person name="Purcell S."/>
            <person name="Rehman B."/>
            <person name="Elkins T."/>
            <person name="Engels R."/>
            <person name="Wang S."/>
            <person name="Nielsen C.B."/>
            <person name="Butler J."/>
            <person name="Endrizzi M."/>
            <person name="Qui D."/>
            <person name="Ianakiev P."/>
            <person name="Bell-Pedersen D."/>
            <person name="Nelson M.A."/>
            <person name="Werner-Washburne M."/>
            <person name="Selitrennikoff C.P."/>
            <person name="Kinsey J.A."/>
            <person name="Braun E.L."/>
            <person name="Zelter A."/>
            <person name="Schulte U."/>
            <person name="Kothe G.O."/>
            <person name="Jedd G."/>
            <person name="Mewes H.-W."/>
            <person name="Staben C."/>
            <person name="Marcotte E."/>
            <person name="Greenberg D."/>
            <person name="Roy A."/>
            <person name="Foley K."/>
            <person name="Naylor J."/>
            <person name="Stange-Thomann N."/>
            <person name="Barrett R."/>
            <person name="Gnerre S."/>
            <person name="Kamal M."/>
            <person name="Kamvysselis M."/>
            <person name="Mauceli E.W."/>
            <person name="Bielke C."/>
            <person name="Rudd S."/>
            <person name="Frishman D."/>
            <person name="Krystofova S."/>
            <person name="Rasmussen C."/>
            <person name="Metzenberg R.L."/>
            <person name="Perkins D.D."/>
            <person name="Kroken S."/>
            <person name="Cogoni C."/>
            <person name="Macino G."/>
            <person name="Catcheside D.E.A."/>
            <person name="Li W."/>
            <person name="Pratt R.J."/>
            <person name="Osmani S.A."/>
            <person name="DeSouza C.P.C."/>
            <person name="Glass N.L."/>
            <person name="Orbach M.J."/>
            <person name="Berglund J.A."/>
            <person name="Voelker R."/>
            <person name="Yarden O."/>
            <person name="Plamann M."/>
            <person name="Seiler S."/>
            <person name="Dunlap J.C."/>
            <person name="Radford A."/>
            <person name="Aramayo R."/>
            <person name="Natvig D.O."/>
            <person name="Alex L.A."/>
            <person name="Mannhaupt G."/>
            <person name="Ebbole D.J."/>
            <person name="Freitag M."/>
            <person name="Paulsen I."/>
            <person name="Sachs M.S."/>
            <person name="Lander E.S."/>
            <person name="Nusbaum C."/>
            <person name="Birren B.W."/>
        </authorList>
    </citation>
    <scope>NUCLEOTIDE SEQUENCE [LARGE SCALE GENOMIC DNA]</scope>
    <source>
        <strain>ATCC 24698 / 74-OR23-1A / CBS 708.71 / DSM 1257 / FGSC 987</strain>
    </source>
</reference>